<protein>
    <recommendedName>
        <fullName>Putative aminoglycoside phosphotransferase</fullName>
        <ecNumber>2.7.1.-</ecNumber>
    </recommendedName>
    <alternativeName>
        <fullName>Putative aminoglycoside antibiotics resistance enzyme</fullName>
    </alternativeName>
</protein>
<keyword id="KW-0002">3D-structure</keyword>
<keyword id="KW-0046">Antibiotic resistance</keyword>
<keyword id="KW-0067">ATP-binding</keyword>
<keyword id="KW-0418">Kinase</keyword>
<keyword id="KW-0460">Magnesium</keyword>
<keyword id="KW-0479">Metal-binding</keyword>
<keyword id="KW-0547">Nucleotide-binding</keyword>
<keyword id="KW-1185">Reference proteome</keyword>
<keyword id="KW-0808">Transferase</keyword>
<accession>P9WI99</accession>
<accession>F2GJM6</accession>
<accession>L0TES4</accession>
<accession>O53318</accession>
<accession>Q7D606</accession>
<organism>
    <name type="scientific">Mycobacterium tuberculosis (strain ATCC 25618 / H37Rv)</name>
    <dbReference type="NCBI Taxonomy" id="83332"/>
    <lineage>
        <taxon>Bacteria</taxon>
        <taxon>Bacillati</taxon>
        <taxon>Actinomycetota</taxon>
        <taxon>Actinomycetes</taxon>
        <taxon>Mycobacteriales</taxon>
        <taxon>Mycobacteriaceae</taxon>
        <taxon>Mycobacterium</taxon>
        <taxon>Mycobacterium tuberculosis complex</taxon>
    </lineage>
</organism>
<comment type="function">
    <text>Might catalyze the phosphorylation of aminoglycosides and confer aminoglycoside antibiotics resistance.</text>
</comment>
<comment type="similarity">
    <text evidence="2">Belongs to the aminoglycoside phosphotransferase family.</text>
</comment>
<sequence length="378" mass="42561">MANEPAIGAIDRLQRSSRDVTTLPAVISRWLSSVLPGGAAPEVTVESGVDSTGMSSETIILTARWQQDGRSIQQKLVARVAPAAEDVPVFPTYRLDHQFEVIRLVGELTDVPVPRVRWIETTGDVLGTPFFLMDYVEGVVPPDVMPYTFGDNWFADAPAERQRQLQDATVAALATLHSIPNAQNTFSFLTQGRTSDTTLHRHFNWVRSWYDFAVEGIGRSPLLERTFEWLQSHWPDDAAAREPVLLWGDARVGNVLYRDFQPVAVLDWEMVALGPRELDVAWMIFAHRVFQELAGLATLPGLPEVMREDDVRATYQALTGVELGDLHWFYVYSGVMWACVFMRTGARRVHFGEIEKPDDVESLFYHAGLMKHLLGEEH</sequence>
<evidence type="ECO:0000269" key="1">
    <source>
    </source>
</evidence>
<evidence type="ECO:0000305" key="2"/>
<evidence type="ECO:0000305" key="3">
    <source>
    </source>
</evidence>
<evidence type="ECO:0007829" key="4">
    <source>
        <dbReference type="PDB" id="3ATS"/>
    </source>
</evidence>
<evidence type="ECO:0007829" key="5">
    <source>
        <dbReference type="PDB" id="3ATT"/>
    </source>
</evidence>
<dbReference type="EC" id="2.7.1.-"/>
<dbReference type="EMBL" id="AL123456">
    <property type="protein sequence ID" value="CCP45979.1"/>
    <property type="molecule type" value="Genomic_DNA"/>
</dbReference>
<dbReference type="PIR" id="F70947">
    <property type="entry name" value="F70947"/>
</dbReference>
<dbReference type="RefSeq" id="NP_217684.1">
    <property type="nucleotide sequence ID" value="NC_000962.3"/>
</dbReference>
<dbReference type="RefSeq" id="WP_003900650.1">
    <property type="nucleotide sequence ID" value="NZ_NVQJ01000019.1"/>
</dbReference>
<dbReference type="PDB" id="3ATS">
    <property type="method" value="X-ray"/>
    <property type="resolution" value="1.67 A"/>
    <property type="chains" value="A=22-378"/>
</dbReference>
<dbReference type="PDB" id="3ATT">
    <property type="method" value="X-ray"/>
    <property type="resolution" value="2.00 A"/>
    <property type="chains" value="A=22-378"/>
</dbReference>
<dbReference type="PDBsum" id="3ATS"/>
<dbReference type="PDBsum" id="3ATT"/>
<dbReference type="SMR" id="P9WI99"/>
<dbReference type="STRING" id="83332.Rv3168"/>
<dbReference type="PaxDb" id="83332-Rv3168"/>
<dbReference type="DNASU" id="888778"/>
<dbReference type="GeneID" id="888778"/>
<dbReference type="KEGG" id="mtu:Rv3168"/>
<dbReference type="KEGG" id="mtv:RVBD_3168"/>
<dbReference type="TubercuList" id="Rv3168"/>
<dbReference type="eggNOG" id="COG3173">
    <property type="taxonomic scope" value="Bacteria"/>
</dbReference>
<dbReference type="InParanoid" id="P9WI99"/>
<dbReference type="OrthoDB" id="3339041at2"/>
<dbReference type="PhylomeDB" id="P9WI99"/>
<dbReference type="EvolutionaryTrace" id="P9WI99"/>
<dbReference type="Proteomes" id="UP000001584">
    <property type="component" value="Chromosome"/>
</dbReference>
<dbReference type="GO" id="GO:0005524">
    <property type="term" value="F:ATP binding"/>
    <property type="evidence" value="ECO:0007669"/>
    <property type="project" value="UniProtKB-KW"/>
</dbReference>
<dbReference type="GO" id="GO:0016301">
    <property type="term" value="F:kinase activity"/>
    <property type="evidence" value="ECO:0007669"/>
    <property type="project" value="UniProtKB-KW"/>
</dbReference>
<dbReference type="GO" id="GO:0046872">
    <property type="term" value="F:metal ion binding"/>
    <property type="evidence" value="ECO:0007669"/>
    <property type="project" value="UniProtKB-KW"/>
</dbReference>
<dbReference type="GO" id="GO:0046677">
    <property type="term" value="P:response to antibiotic"/>
    <property type="evidence" value="ECO:0007669"/>
    <property type="project" value="UniProtKB-KW"/>
</dbReference>
<dbReference type="CDD" id="cd05154">
    <property type="entry name" value="ACAD10_11_N-like"/>
    <property type="match status" value="1"/>
</dbReference>
<dbReference type="Gene3D" id="3.90.1200.10">
    <property type="match status" value="1"/>
</dbReference>
<dbReference type="Gene3D" id="3.30.200.20">
    <property type="entry name" value="Phosphorylase Kinase, domain 1"/>
    <property type="match status" value="1"/>
</dbReference>
<dbReference type="InterPro" id="IPR041726">
    <property type="entry name" value="ACAD10_11_N"/>
</dbReference>
<dbReference type="InterPro" id="IPR051678">
    <property type="entry name" value="AGP_Transferase"/>
</dbReference>
<dbReference type="InterPro" id="IPR002575">
    <property type="entry name" value="Aminoglycoside_PTrfase"/>
</dbReference>
<dbReference type="InterPro" id="IPR011009">
    <property type="entry name" value="Kinase-like_dom_sf"/>
</dbReference>
<dbReference type="PANTHER" id="PTHR21310:SF40">
    <property type="entry name" value="AMINOGLYCOSIDE PHOSPHOTRANSFERASE DOMAIN-CONTAINING PROTEIN-RELATED"/>
    <property type="match status" value="1"/>
</dbReference>
<dbReference type="PANTHER" id="PTHR21310">
    <property type="entry name" value="AMINOGLYCOSIDE PHOSPHOTRANSFERASE-RELATED-RELATED"/>
    <property type="match status" value="1"/>
</dbReference>
<dbReference type="Pfam" id="PF01636">
    <property type="entry name" value="APH"/>
    <property type="match status" value="1"/>
</dbReference>
<dbReference type="SUPFAM" id="SSF56112">
    <property type="entry name" value="Protein kinase-like (PK-like)"/>
    <property type="match status" value="1"/>
</dbReference>
<reference key="1">
    <citation type="journal article" date="1998" name="Nature">
        <title>Deciphering the biology of Mycobacterium tuberculosis from the complete genome sequence.</title>
        <authorList>
            <person name="Cole S.T."/>
            <person name="Brosch R."/>
            <person name="Parkhill J."/>
            <person name="Garnier T."/>
            <person name="Churcher C.M."/>
            <person name="Harris D.E."/>
            <person name="Gordon S.V."/>
            <person name="Eiglmeier K."/>
            <person name="Gas S."/>
            <person name="Barry C.E. III"/>
            <person name="Tekaia F."/>
            <person name="Badcock K."/>
            <person name="Basham D."/>
            <person name="Brown D."/>
            <person name="Chillingworth T."/>
            <person name="Connor R."/>
            <person name="Davies R.M."/>
            <person name="Devlin K."/>
            <person name="Feltwell T."/>
            <person name="Gentles S."/>
            <person name="Hamlin N."/>
            <person name="Holroyd S."/>
            <person name="Hornsby T."/>
            <person name="Jagels K."/>
            <person name="Krogh A."/>
            <person name="McLean J."/>
            <person name="Moule S."/>
            <person name="Murphy L.D."/>
            <person name="Oliver S."/>
            <person name="Osborne J."/>
            <person name="Quail M.A."/>
            <person name="Rajandream M.A."/>
            <person name="Rogers J."/>
            <person name="Rutter S."/>
            <person name="Seeger K."/>
            <person name="Skelton S."/>
            <person name="Squares S."/>
            <person name="Squares R."/>
            <person name="Sulston J.E."/>
            <person name="Taylor K."/>
            <person name="Whitehead S."/>
            <person name="Barrell B.G."/>
        </authorList>
    </citation>
    <scope>NUCLEOTIDE SEQUENCE [LARGE SCALE GENOMIC DNA]</scope>
    <source>
        <strain>ATCC 25618 / H37Rv</strain>
    </source>
</reference>
<reference key="2">
    <citation type="journal article" date="2011" name="Acta Crystallogr. F">
        <title>Cloning, expression, purification, crystallization and X-ray crystallographic analysis of Rv3168 from Mycobacterium tuberculosis H37Rv.</title>
        <authorList>
            <person name="Kim S."/>
            <person name="Nguyen C.M."/>
            <person name="Yeo S.J."/>
            <person name="Ahn J.W."/>
            <person name="Kim E.J."/>
            <person name="Kim K.J."/>
        </authorList>
    </citation>
    <scope>CRYSTALLIZATION</scope>
    <source>
        <strain>ATCC 25618 / H37Rv</strain>
    </source>
</reference>
<reference key="3">
    <citation type="journal article" date="2011" name="Mol. Cell. Proteomics">
        <title>Proteogenomic analysis of Mycobacterium tuberculosis by high resolution mass spectrometry.</title>
        <authorList>
            <person name="Kelkar D.S."/>
            <person name="Kumar D."/>
            <person name="Kumar P."/>
            <person name="Balakrishnan L."/>
            <person name="Muthusamy B."/>
            <person name="Yadav A.K."/>
            <person name="Shrivastava P."/>
            <person name="Marimuthu A."/>
            <person name="Anand S."/>
            <person name="Sundaram H."/>
            <person name="Kingsbury R."/>
            <person name="Harsha H.C."/>
            <person name="Nair B."/>
            <person name="Prasad T.S."/>
            <person name="Chauhan D.S."/>
            <person name="Katoch K."/>
            <person name="Katoch V.M."/>
            <person name="Kumar P."/>
            <person name="Chaerkady R."/>
            <person name="Ramachandran S."/>
            <person name="Dash D."/>
            <person name="Pandey A."/>
        </authorList>
    </citation>
    <scope>IDENTIFICATION BY MASS SPECTROMETRY [LARGE SCALE ANALYSIS]</scope>
    <source>
        <strain>ATCC 25618 / H37Rv</strain>
    </source>
</reference>
<reference key="4">
    <citation type="journal article" date="2011" name="Proteins">
        <title>Crystal structure of Mycobacterium tuberculosis Rv3168: a putative aminoglycoside antibiotics resistance enzyme.</title>
        <authorList>
            <person name="Kim S."/>
            <person name="Nguyen C.M."/>
            <person name="Kim E.J."/>
            <person name="Kim K.J."/>
        </authorList>
    </citation>
    <scope>X-RAY CRYSTALLOGRAPHY (1.67 ANGSTROMS) OF APOENZYME AND IN COMPLEX WITH ATP AND MAGNESIUM</scope>
    <scope>PUTATIVE FUNCTION</scope>
    <scope>ACTIVE SITE</scope>
    <source>
        <strain>ATCC 25618 / H37Rv</strain>
    </source>
</reference>
<proteinExistence type="evidence at protein level"/>
<name>Y3168_MYCTU</name>
<feature type="chain" id="PRO_0000420881" description="Putative aminoglycoside phosphotransferase">
    <location>
        <begin position="1"/>
        <end position="378"/>
    </location>
</feature>
<feature type="active site" description="Proton acceptor" evidence="3">
    <location>
        <position position="249"/>
    </location>
</feature>
<feature type="binding site" evidence="1">
    <location>
        <position position="79"/>
    </location>
    <ligand>
        <name>ATP</name>
        <dbReference type="ChEBI" id="CHEBI:30616"/>
    </ligand>
</feature>
<feature type="binding site" evidence="1">
    <location>
        <begin position="134"/>
        <end position="136"/>
    </location>
    <ligand>
        <name>ATP</name>
        <dbReference type="ChEBI" id="CHEBI:30616"/>
    </ligand>
</feature>
<feature type="binding site" evidence="1">
    <location>
        <position position="254"/>
    </location>
    <ligand>
        <name>Mg(2+)</name>
        <dbReference type="ChEBI" id="CHEBI:18420"/>
        <label>1</label>
    </ligand>
</feature>
<feature type="binding site" evidence="1">
    <location>
        <position position="267"/>
    </location>
    <ligand>
        <name>Mg(2+)</name>
        <dbReference type="ChEBI" id="CHEBI:18420"/>
        <label>1</label>
    </ligand>
</feature>
<feature type="binding site" evidence="1">
    <location>
        <position position="267"/>
    </location>
    <ligand>
        <name>Mg(2+)</name>
        <dbReference type="ChEBI" id="CHEBI:18420"/>
        <label>2</label>
    </ligand>
</feature>
<feature type="binding site" evidence="1">
    <location>
        <position position="269"/>
    </location>
    <ligand>
        <name>Mg(2+)</name>
        <dbReference type="ChEBI" id="CHEBI:18420"/>
        <label>2</label>
    </ligand>
</feature>
<feature type="helix" evidence="4">
    <location>
        <begin position="23"/>
        <end position="34"/>
    </location>
</feature>
<feature type="strand" evidence="4">
    <location>
        <begin position="42"/>
        <end position="49"/>
    </location>
</feature>
<feature type="strand" evidence="4">
    <location>
        <begin position="53"/>
        <end position="67"/>
    </location>
</feature>
<feature type="strand" evidence="4">
    <location>
        <begin position="70"/>
        <end position="80"/>
    </location>
</feature>
<feature type="helix" evidence="4">
    <location>
        <begin position="84"/>
        <end position="86"/>
    </location>
</feature>
<feature type="strand" evidence="4">
    <location>
        <begin position="89"/>
        <end position="91"/>
    </location>
</feature>
<feature type="helix" evidence="4">
    <location>
        <begin position="95"/>
        <end position="108"/>
    </location>
</feature>
<feature type="strand" evidence="4">
    <location>
        <begin position="116"/>
        <end position="120"/>
    </location>
</feature>
<feature type="turn" evidence="4">
    <location>
        <begin position="124"/>
        <end position="126"/>
    </location>
</feature>
<feature type="strand" evidence="4">
    <location>
        <begin position="130"/>
        <end position="134"/>
    </location>
</feature>
<feature type="turn" evidence="4">
    <location>
        <begin position="143"/>
        <end position="146"/>
    </location>
</feature>
<feature type="helix" evidence="4">
    <location>
        <begin position="147"/>
        <end position="149"/>
    </location>
</feature>
<feature type="turn" evidence="4">
    <location>
        <begin position="153"/>
        <end position="156"/>
    </location>
</feature>
<feature type="helix" evidence="4">
    <location>
        <begin position="159"/>
        <end position="176"/>
    </location>
</feature>
<feature type="helix" evidence="4">
    <location>
        <begin position="182"/>
        <end position="185"/>
    </location>
</feature>
<feature type="helix" evidence="4">
    <location>
        <begin position="187"/>
        <end position="189"/>
    </location>
</feature>
<feature type="helix" evidence="4">
    <location>
        <begin position="198"/>
        <end position="217"/>
    </location>
</feature>
<feature type="helix" evidence="4">
    <location>
        <begin position="221"/>
        <end position="232"/>
    </location>
</feature>
<feature type="helix" evidence="4">
    <location>
        <begin position="236"/>
        <end position="240"/>
    </location>
</feature>
<feature type="strand" evidence="4">
    <location>
        <begin position="244"/>
        <end position="246"/>
    </location>
</feature>
<feature type="helix" evidence="4">
    <location>
        <begin position="252"/>
        <end position="254"/>
    </location>
</feature>
<feature type="strand" evidence="4">
    <location>
        <begin position="255"/>
        <end position="258"/>
    </location>
</feature>
<feature type="strand" evidence="4">
    <location>
        <begin position="261"/>
        <end position="265"/>
    </location>
</feature>
<feature type="helix" evidence="4">
    <location>
        <begin position="268"/>
        <end position="270"/>
    </location>
</feature>
<feature type="strand" evidence="4">
    <location>
        <begin position="272"/>
        <end position="274"/>
    </location>
</feature>
<feature type="helix" evidence="4">
    <location>
        <begin position="277"/>
        <end position="296"/>
    </location>
</feature>
<feature type="turn" evidence="5">
    <location>
        <begin position="303"/>
        <end position="306"/>
    </location>
</feature>
<feature type="helix" evidence="4">
    <location>
        <begin position="308"/>
        <end position="319"/>
    </location>
</feature>
<feature type="helix" evidence="4">
    <location>
        <begin position="327"/>
        <end position="350"/>
    </location>
</feature>
<feature type="helix" evidence="4">
    <location>
        <begin position="360"/>
        <end position="363"/>
    </location>
</feature>
<feature type="helix" evidence="4">
    <location>
        <begin position="367"/>
        <end position="374"/>
    </location>
</feature>
<gene>
    <name type="ordered locus">Rv3168</name>
</gene>